<name>HCAF_SHISS</name>
<dbReference type="EC" id="1.14.12.19" evidence="1"/>
<dbReference type="EMBL" id="CP000038">
    <property type="protein sequence ID" value="AAZ89248.1"/>
    <property type="molecule type" value="Genomic_DNA"/>
</dbReference>
<dbReference type="RefSeq" id="WP_001276080.1">
    <property type="nucleotide sequence ID" value="NC_007384.1"/>
</dbReference>
<dbReference type="SMR" id="Q3YZ14"/>
<dbReference type="GeneID" id="93774597"/>
<dbReference type="KEGG" id="ssn:SSON_2621"/>
<dbReference type="HOGENOM" id="CLU_102527_1_1_6"/>
<dbReference type="UniPathway" id="UPA00714"/>
<dbReference type="Proteomes" id="UP000002529">
    <property type="component" value="Chromosome"/>
</dbReference>
<dbReference type="GO" id="GO:0008695">
    <property type="term" value="F:3-phenylpropionate dioxygenase activity"/>
    <property type="evidence" value="ECO:0007669"/>
    <property type="project" value="UniProtKB-UniRule"/>
</dbReference>
<dbReference type="GO" id="GO:0019380">
    <property type="term" value="P:3-phenylpropionate catabolic process"/>
    <property type="evidence" value="ECO:0007669"/>
    <property type="project" value="UniProtKB-UniRule"/>
</dbReference>
<dbReference type="CDD" id="cd00667">
    <property type="entry name" value="ring_hydroxylating_dioxygenases_beta"/>
    <property type="match status" value="1"/>
</dbReference>
<dbReference type="FunFam" id="3.10.450.50:FF:000008">
    <property type="entry name" value="3-phenylpropionate/cinnamic acid dioxygenase subunit beta"/>
    <property type="match status" value="1"/>
</dbReference>
<dbReference type="Gene3D" id="3.10.450.50">
    <property type="match status" value="1"/>
</dbReference>
<dbReference type="HAMAP" id="MF_01649">
    <property type="entry name" value="HcaF"/>
    <property type="match status" value="1"/>
</dbReference>
<dbReference type="InterPro" id="IPR054881">
    <property type="entry name" value="3PPDioc_HcaF"/>
</dbReference>
<dbReference type="InterPro" id="IPR023712">
    <property type="entry name" value="HcaF"/>
</dbReference>
<dbReference type="InterPro" id="IPR032710">
    <property type="entry name" value="NTF2-like_dom_sf"/>
</dbReference>
<dbReference type="InterPro" id="IPR000391">
    <property type="entry name" value="Rng_hydr_dOase-bsu"/>
</dbReference>
<dbReference type="NCBIfam" id="NF042947">
    <property type="entry name" value="3PPDioc_HcaF"/>
    <property type="match status" value="1"/>
</dbReference>
<dbReference type="NCBIfam" id="NF007479">
    <property type="entry name" value="PRK10069.1"/>
    <property type="match status" value="1"/>
</dbReference>
<dbReference type="PANTHER" id="PTHR41534:SF2">
    <property type="entry name" value="3-PHENYLPROPIONATE_CINNAMIC ACID DIOXYGENASE SUBUNIT BETA"/>
    <property type="match status" value="1"/>
</dbReference>
<dbReference type="PANTHER" id="PTHR41534">
    <property type="entry name" value="BLR3401 PROTEIN"/>
    <property type="match status" value="1"/>
</dbReference>
<dbReference type="Pfam" id="PF00866">
    <property type="entry name" value="Ring_hydroxyl_B"/>
    <property type="match status" value="1"/>
</dbReference>
<dbReference type="SUPFAM" id="SSF54427">
    <property type="entry name" value="NTF2-like"/>
    <property type="match status" value="1"/>
</dbReference>
<reference key="1">
    <citation type="journal article" date="2005" name="Nucleic Acids Res.">
        <title>Genome dynamics and diversity of Shigella species, the etiologic agents of bacillary dysentery.</title>
        <authorList>
            <person name="Yang F."/>
            <person name="Yang J."/>
            <person name="Zhang X."/>
            <person name="Chen L."/>
            <person name="Jiang Y."/>
            <person name="Yan Y."/>
            <person name="Tang X."/>
            <person name="Wang J."/>
            <person name="Xiong Z."/>
            <person name="Dong J."/>
            <person name="Xue Y."/>
            <person name="Zhu Y."/>
            <person name="Xu X."/>
            <person name="Sun L."/>
            <person name="Chen S."/>
            <person name="Nie H."/>
            <person name="Peng J."/>
            <person name="Xu J."/>
            <person name="Wang Y."/>
            <person name="Yuan Z."/>
            <person name="Wen Y."/>
            <person name="Yao Z."/>
            <person name="Shen Y."/>
            <person name="Qiang B."/>
            <person name="Hou Y."/>
            <person name="Yu J."/>
            <person name="Jin Q."/>
        </authorList>
    </citation>
    <scope>NUCLEOTIDE SEQUENCE [LARGE SCALE GENOMIC DNA]</scope>
    <source>
        <strain>Ss046</strain>
    </source>
</reference>
<keyword id="KW-0058">Aromatic hydrocarbons catabolism</keyword>
<keyword id="KW-0223">Dioxygenase</keyword>
<keyword id="KW-0520">NAD</keyword>
<keyword id="KW-0560">Oxidoreductase</keyword>
<keyword id="KW-1185">Reference proteome</keyword>
<feature type="chain" id="PRO_0000333717" description="3-phenylpropionate/cinnamic acid dioxygenase subunit beta">
    <location>
        <begin position="1"/>
        <end position="172"/>
    </location>
</feature>
<evidence type="ECO:0000255" key="1">
    <source>
        <dbReference type="HAMAP-Rule" id="MF_01649"/>
    </source>
</evidence>
<organism>
    <name type="scientific">Shigella sonnei (strain Ss046)</name>
    <dbReference type="NCBI Taxonomy" id="300269"/>
    <lineage>
        <taxon>Bacteria</taxon>
        <taxon>Pseudomonadati</taxon>
        <taxon>Pseudomonadota</taxon>
        <taxon>Gammaproteobacteria</taxon>
        <taxon>Enterobacterales</taxon>
        <taxon>Enterobacteriaceae</taxon>
        <taxon>Shigella</taxon>
    </lineage>
</organism>
<accession>Q3YZ14</accession>
<protein>
    <recommendedName>
        <fullName evidence="1">3-phenylpropionate/cinnamic acid dioxygenase subunit beta</fullName>
        <ecNumber evidence="1">1.14.12.19</ecNumber>
    </recommendedName>
</protein>
<gene>
    <name evidence="1" type="primary">hcaF</name>
    <name type="ordered locus">SSON_2621</name>
</gene>
<comment type="function">
    <text evidence="1">Part of the multicomponent 3-phenylpropionate dioxygenase. Converts 3-phenylpropionic acid (PP) and cinnamic acid (CI) into 3-phenylpropionate-dihydrodiol (PP-dihydrodiol) and cinnamic acid-dihydrodiol (CI-dihydrodiol), respectively.</text>
</comment>
<comment type="catalytic activity">
    <reaction evidence="1">
        <text>3-phenylpropanoate + NADH + O2 + H(+) = 3-(cis-5,6-dihydroxycyclohexa-1,3-dien-1-yl)propanoate + NAD(+)</text>
        <dbReference type="Rhea" id="RHEA:20357"/>
        <dbReference type="ChEBI" id="CHEBI:15378"/>
        <dbReference type="ChEBI" id="CHEBI:15379"/>
        <dbReference type="ChEBI" id="CHEBI:51057"/>
        <dbReference type="ChEBI" id="CHEBI:57540"/>
        <dbReference type="ChEBI" id="CHEBI:57945"/>
        <dbReference type="ChEBI" id="CHEBI:60087"/>
        <dbReference type="EC" id="1.14.12.19"/>
    </reaction>
</comment>
<comment type="catalytic activity">
    <reaction evidence="1">
        <text>(E)-cinnamate + NADH + O2 + H(+) = (2E)-3-(cis-5,6-dihydroxycyclohexa-1,3-dien-1-yl)prop-2-enoate + NAD(+)</text>
        <dbReference type="Rhea" id="RHEA:25058"/>
        <dbReference type="ChEBI" id="CHEBI:15378"/>
        <dbReference type="ChEBI" id="CHEBI:15379"/>
        <dbReference type="ChEBI" id="CHEBI:15669"/>
        <dbReference type="ChEBI" id="CHEBI:57540"/>
        <dbReference type="ChEBI" id="CHEBI:57945"/>
        <dbReference type="ChEBI" id="CHEBI:61451"/>
        <dbReference type="EC" id="1.14.12.19"/>
    </reaction>
</comment>
<comment type="pathway">
    <text evidence="1">Aromatic compound metabolism; 3-phenylpropanoate degradation.</text>
</comment>
<comment type="subunit">
    <text evidence="1">This dioxygenase system consists of four proteins: the two subunits of the hydroxylase component (HcaE and HcaF), a ferredoxin (HcaC) and a ferredoxin reductase (HcaD).</text>
</comment>
<comment type="similarity">
    <text evidence="1">Belongs to the bacterial ring-hydroxylating dioxygenase beta subunit family.</text>
</comment>
<sequence>MSAQVSLELHHRISQFLFHEASLLDDWKFRDWLEQLDKEIRYTMRTTVNAQTRDRRKGVQPPTTWIFNDTKDQLERRIARLETGMAWAEEPPSRTRHLISNCQISETDIPNVFAVRVNYLLYRAQKERDETFYVGTRFDKVRRLEDDNWRLLERDIVLDQAVITSHNLSVLF</sequence>
<proteinExistence type="inferred from homology"/>